<evidence type="ECO:0000255" key="1">
    <source>
        <dbReference type="HAMAP-Rule" id="MF_00184"/>
    </source>
</evidence>
<evidence type="ECO:0000255" key="2">
    <source>
        <dbReference type="PROSITE-ProRule" id="PRU01228"/>
    </source>
</evidence>
<keyword id="KW-0030">Aminoacyl-tRNA synthetase</keyword>
<keyword id="KW-0067">ATP-binding</keyword>
<keyword id="KW-0963">Cytoplasm</keyword>
<keyword id="KW-0436">Ligase</keyword>
<keyword id="KW-0479">Metal-binding</keyword>
<keyword id="KW-0547">Nucleotide-binding</keyword>
<keyword id="KW-0648">Protein biosynthesis</keyword>
<keyword id="KW-1185">Reference proteome</keyword>
<keyword id="KW-0694">RNA-binding</keyword>
<keyword id="KW-0820">tRNA-binding</keyword>
<keyword id="KW-0862">Zinc</keyword>
<accession>Q883H9</accession>
<name>SYT_PSESM</name>
<organism>
    <name type="scientific">Pseudomonas syringae pv. tomato (strain ATCC BAA-871 / DC3000)</name>
    <dbReference type="NCBI Taxonomy" id="223283"/>
    <lineage>
        <taxon>Bacteria</taxon>
        <taxon>Pseudomonadati</taxon>
        <taxon>Pseudomonadota</taxon>
        <taxon>Gammaproteobacteria</taxon>
        <taxon>Pseudomonadales</taxon>
        <taxon>Pseudomonadaceae</taxon>
        <taxon>Pseudomonas</taxon>
    </lineage>
</organism>
<feature type="chain" id="PRO_0000101029" description="Threonine--tRNA ligase">
    <location>
        <begin position="1"/>
        <end position="640"/>
    </location>
</feature>
<feature type="domain" description="TGS" evidence="2">
    <location>
        <begin position="1"/>
        <end position="61"/>
    </location>
</feature>
<feature type="region of interest" description="Catalytic" evidence="1">
    <location>
        <begin position="242"/>
        <end position="533"/>
    </location>
</feature>
<feature type="binding site" evidence="1">
    <location>
        <position position="333"/>
    </location>
    <ligand>
        <name>Zn(2+)</name>
        <dbReference type="ChEBI" id="CHEBI:29105"/>
    </ligand>
</feature>
<feature type="binding site" evidence="1">
    <location>
        <position position="384"/>
    </location>
    <ligand>
        <name>Zn(2+)</name>
        <dbReference type="ChEBI" id="CHEBI:29105"/>
    </ligand>
</feature>
<feature type="binding site" evidence="1">
    <location>
        <position position="510"/>
    </location>
    <ligand>
        <name>Zn(2+)</name>
        <dbReference type="ChEBI" id="CHEBI:29105"/>
    </ligand>
</feature>
<proteinExistence type="inferred from homology"/>
<protein>
    <recommendedName>
        <fullName evidence="1">Threonine--tRNA ligase</fullName>
        <ecNumber evidence="1">6.1.1.3</ecNumber>
    </recommendedName>
    <alternativeName>
        <fullName evidence="1">Threonyl-tRNA synthetase</fullName>
        <shortName evidence="1">ThrRS</shortName>
    </alternativeName>
</protein>
<dbReference type="EC" id="6.1.1.3" evidence="1"/>
<dbReference type="EMBL" id="AE016853">
    <property type="protein sequence ID" value="AAO55889.1"/>
    <property type="molecule type" value="Genomic_DNA"/>
</dbReference>
<dbReference type="RefSeq" id="NP_792194.1">
    <property type="nucleotide sequence ID" value="NC_004578.1"/>
</dbReference>
<dbReference type="RefSeq" id="WP_005738829.1">
    <property type="nucleotide sequence ID" value="NC_004578.1"/>
</dbReference>
<dbReference type="SMR" id="Q883H9"/>
<dbReference type="STRING" id="223283.PSPTO_2378"/>
<dbReference type="GeneID" id="61792810"/>
<dbReference type="KEGG" id="pst:PSPTO_2378"/>
<dbReference type="PATRIC" id="fig|223283.9.peg.2413"/>
<dbReference type="eggNOG" id="COG0441">
    <property type="taxonomic scope" value="Bacteria"/>
</dbReference>
<dbReference type="HOGENOM" id="CLU_008554_0_1_6"/>
<dbReference type="OrthoDB" id="9802304at2"/>
<dbReference type="PhylomeDB" id="Q883H9"/>
<dbReference type="Proteomes" id="UP000002515">
    <property type="component" value="Chromosome"/>
</dbReference>
<dbReference type="GO" id="GO:0005829">
    <property type="term" value="C:cytosol"/>
    <property type="evidence" value="ECO:0007669"/>
    <property type="project" value="TreeGrafter"/>
</dbReference>
<dbReference type="GO" id="GO:0005524">
    <property type="term" value="F:ATP binding"/>
    <property type="evidence" value="ECO:0007669"/>
    <property type="project" value="UniProtKB-UniRule"/>
</dbReference>
<dbReference type="GO" id="GO:0046872">
    <property type="term" value="F:metal ion binding"/>
    <property type="evidence" value="ECO:0007669"/>
    <property type="project" value="UniProtKB-KW"/>
</dbReference>
<dbReference type="GO" id="GO:0004829">
    <property type="term" value="F:threonine-tRNA ligase activity"/>
    <property type="evidence" value="ECO:0007669"/>
    <property type="project" value="UniProtKB-UniRule"/>
</dbReference>
<dbReference type="GO" id="GO:0000049">
    <property type="term" value="F:tRNA binding"/>
    <property type="evidence" value="ECO:0007669"/>
    <property type="project" value="UniProtKB-KW"/>
</dbReference>
<dbReference type="GO" id="GO:0006435">
    <property type="term" value="P:threonyl-tRNA aminoacylation"/>
    <property type="evidence" value="ECO:0007669"/>
    <property type="project" value="UniProtKB-UniRule"/>
</dbReference>
<dbReference type="CDD" id="cd01667">
    <property type="entry name" value="TGS_ThrRS"/>
    <property type="match status" value="1"/>
</dbReference>
<dbReference type="CDD" id="cd00860">
    <property type="entry name" value="ThrRS_anticodon"/>
    <property type="match status" value="1"/>
</dbReference>
<dbReference type="CDD" id="cd00771">
    <property type="entry name" value="ThrRS_core"/>
    <property type="match status" value="1"/>
</dbReference>
<dbReference type="FunFam" id="3.10.20.30:FF:000005">
    <property type="entry name" value="Threonine--tRNA ligase"/>
    <property type="match status" value="1"/>
</dbReference>
<dbReference type="FunFam" id="3.30.54.20:FF:000002">
    <property type="entry name" value="Threonine--tRNA ligase"/>
    <property type="match status" value="1"/>
</dbReference>
<dbReference type="FunFam" id="3.30.930.10:FF:000002">
    <property type="entry name" value="Threonine--tRNA ligase"/>
    <property type="match status" value="1"/>
</dbReference>
<dbReference type="FunFam" id="3.40.50.800:FF:000001">
    <property type="entry name" value="Threonine--tRNA ligase"/>
    <property type="match status" value="1"/>
</dbReference>
<dbReference type="FunFam" id="3.30.980.10:FF:000005">
    <property type="entry name" value="Threonyl-tRNA synthetase, mitochondrial"/>
    <property type="match status" value="1"/>
</dbReference>
<dbReference type="Gene3D" id="3.10.20.30">
    <property type="match status" value="1"/>
</dbReference>
<dbReference type="Gene3D" id="3.30.54.20">
    <property type="match status" value="1"/>
</dbReference>
<dbReference type="Gene3D" id="3.40.50.800">
    <property type="entry name" value="Anticodon-binding domain"/>
    <property type="match status" value="1"/>
</dbReference>
<dbReference type="Gene3D" id="3.30.930.10">
    <property type="entry name" value="Bira Bifunctional Protein, Domain 2"/>
    <property type="match status" value="1"/>
</dbReference>
<dbReference type="Gene3D" id="3.30.980.10">
    <property type="entry name" value="Threonyl-trna Synthetase, Chain A, domain 2"/>
    <property type="match status" value="1"/>
</dbReference>
<dbReference type="HAMAP" id="MF_00184">
    <property type="entry name" value="Thr_tRNA_synth"/>
    <property type="match status" value="1"/>
</dbReference>
<dbReference type="InterPro" id="IPR002314">
    <property type="entry name" value="aa-tRNA-synt_IIb"/>
</dbReference>
<dbReference type="InterPro" id="IPR006195">
    <property type="entry name" value="aa-tRNA-synth_II"/>
</dbReference>
<dbReference type="InterPro" id="IPR045864">
    <property type="entry name" value="aa-tRNA-synth_II/BPL/LPL"/>
</dbReference>
<dbReference type="InterPro" id="IPR004154">
    <property type="entry name" value="Anticodon-bd"/>
</dbReference>
<dbReference type="InterPro" id="IPR036621">
    <property type="entry name" value="Anticodon-bd_dom_sf"/>
</dbReference>
<dbReference type="InterPro" id="IPR012675">
    <property type="entry name" value="Beta-grasp_dom_sf"/>
</dbReference>
<dbReference type="InterPro" id="IPR004095">
    <property type="entry name" value="TGS"/>
</dbReference>
<dbReference type="InterPro" id="IPR012676">
    <property type="entry name" value="TGS-like"/>
</dbReference>
<dbReference type="InterPro" id="IPR002320">
    <property type="entry name" value="Thr-tRNA-ligase_IIa"/>
</dbReference>
<dbReference type="InterPro" id="IPR018163">
    <property type="entry name" value="Thr/Ala-tRNA-synth_IIc_edit"/>
</dbReference>
<dbReference type="InterPro" id="IPR047246">
    <property type="entry name" value="ThrRS_anticodon"/>
</dbReference>
<dbReference type="InterPro" id="IPR033728">
    <property type="entry name" value="ThrRS_core"/>
</dbReference>
<dbReference type="InterPro" id="IPR012947">
    <property type="entry name" value="tRNA_SAD"/>
</dbReference>
<dbReference type="NCBIfam" id="TIGR00418">
    <property type="entry name" value="thrS"/>
    <property type="match status" value="1"/>
</dbReference>
<dbReference type="PANTHER" id="PTHR11451:SF44">
    <property type="entry name" value="THREONINE--TRNA LIGASE, CHLOROPLASTIC_MITOCHONDRIAL 2"/>
    <property type="match status" value="1"/>
</dbReference>
<dbReference type="PANTHER" id="PTHR11451">
    <property type="entry name" value="THREONINE-TRNA LIGASE"/>
    <property type="match status" value="1"/>
</dbReference>
<dbReference type="Pfam" id="PF03129">
    <property type="entry name" value="HGTP_anticodon"/>
    <property type="match status" value="1"/>
</dbReference>
<dbReference type="Pfam" id="PF02824">
    <property type="entry name" value="TGS"/>
    <property type="match status" value="1"/>
</dbReference>
<dbReference type="Pfam" id="PF00587">
    <property type="entry name" value="tRNA-synt_2b"/>
    <property type="match status" value="1"/>
</dbReference>
<dbReference type="Pfam" id="PF07973">
    <property type="entry name" value="tRNA_SAD"/>
    <property type="match status" value="1"/>
</dbReference>
<dbReference type="PRINTS" id="PR01047">
    <property type="entry name" value="TRNASYNTHTHR"/>
</dbReference>
<dbReference type="SMART" id="SM00863">
    <property type="entry name" value="tRNA_SAD"/>
    <property type="match status" value="1"/>
</dbReference>
<dbReference type="SUPFAM" id="SSF52954">
    <property type="entry name" value="Class II aaRS ABD-related"/>
    <property type="match status" value="1"/>
</dbReference>
<dbReference type="SUPFAM" id="SSF55681">
    <property type="entry name" value="Class II aaRS and biotin synthetases"/>
    <property type="match status" value="1"/>
</dbReference>
<dbReference type="SUPFAM" id="SSF81271">
    <property type="entry name" value="TGS-like"/>
    <property type="match status" value="1"/>
</dbReference>
<dbReference type="SUPFAM" id="SSF55186">
    <property type="entry name" value="ThrRS/AlaRS common domain"/>
    <property type="match status" value="1"/>
</dbReference>
<dbReference type="PROSITE" id="PS50862">
    <property type="entry name" value="AA_TRNA_LIGASE_II"/>
    <property type="match status" value="1"/>
</dbReference>
<dbReference type="PROSITE" id="PS51880">
    <property type="entry name" value="TGS"/>
    <property type="match status" value="1"/>
</dbReference>
<comment type="function">
    <text evidence="1">Catalyzes the attachment of threonine to tRNA(Thr) in a two-step reaction: L-threonine is first activated by ATP to form Thr-AMP and then transferred to the acceptor end of tRNA(Thr). Also edits incorrectly charged L-seryl-tRNA(Thr).</text>
</comment>
<comment type="catalytic activity">
    <reaction evidence="1">
        <text>tRNA(Thr) + L-threonine + ATP = L-threonyl-tRNA(Thr) + AMP + diphosphate + H(+)</text>
        <dbReference type="Rhea" id="RHEA:24624"/>
        <dbReference type="Rhea" id="RHEA-COMP:9670"/>
        <dbReference type="Rhea" id="RHEA-COMP:9704"/>
        <dbReference type="ChEBI" id="CHEBI:15378"/>
        <dbReference type="ChEBI" id="CHEBI:30616"/>
        <dbReference type="ChEBI" id="CHEBI:33019"/>
        <dbReference type="ChEBI" id="CHEBI:57926"/>
        <dbReference type="ChEBI" id="CHEBI:78442"/>
        <dbReference type="ChEBI" id="CHEBI:78534"/>
        <dbReference type="ChEBI" id="CHEBI:456215"/>
        <dbReference type="EC" id="6.1.1.3"/>
    </reaction>
</comment>
<comment type="cofactor">
    <cofactor evidence="1">
        <name>Zn(2+)</name>
        <dbReference type="ChEBI" id="CHEBI:29105"/>
    </cofactor>
    <text evidence="1">Binds 1 zinc ion per subunit.</text>
</comment>
<comment type="subunit">
    <text evidence="1">Homodimer.</text>
</comment>
<comment type="subcellular location">
    <subcellularLocation>
        <location evidence="1">Cytoplasm</location>
    </subcellularLocation>
</comment>
<comment type="similarity">
    <text evidence="1">Belongs to the class-II aminoacyl-tRNA synthetase family.</text>
</comment>
<sequence>MPTITLPDGSQRSFDHAVSVADVALSIGAGLAKATVAGKVDGKLVDACDLIENDASLQIITPKDAEGLEIIRHSCAHLVGHAVKQLYPTAKMVIGPVIDDGFYYDIAYERPFTPDDLAAIEQRMQQLIEKDYDVIKKVTPRAEVIEVFTARHEDYKLRLVEGMPDEQAMGLYYHEEYVDMCRGPHVPNTRFLKSFKLTKLSGAYWRGDAKNEQLQRVYGTAWADKKQLAAYIQRIEEAEKRDHRKIGKRLGLFHTQEEAPGMVFWHPQGWTLYQVLEQYMRKVQRENGYLEIKTPQVVDRSLWEKSGHWANYADNMFTTQSESRDYAIKPMNCPCHVQVFNQGLKSYRELPLRLAEFGACHRNEPSGALHGIMRVRGFTQDDAHIFCTEDQMQAESAAFIKLTLDVYADFGFKDIELKLSTRPEKRVGSDELWDRAESALASALDSAGLPYDLQPGEGAFYGPKIEFSLKDCLGRVWQCGTLQLDFNLPIRLSAEYVSEDNSRKNPVMLHRAILGSFERFIGILIEHYEGAFPAWLAPTQAVIMNITDKQADFALEVEKTLAESGFRAKSDLRNEKIGFKIREHTLLKVPYLLVIGDREVEMQTVAVRTREGADLGSMPVAQFAEFLAQAVSRRGRQDTE</sequence>
<reference key="1">
    <citation type="journal article" date="2003" name="Proc. Natl. Acad. Sci. U.S.A.">
        <title>The complete genome sequence of the Arabidopsis and tomato pathogen Pseudomonas syringae pv. tomato DC3000.</title>
        <authorList>
            <person name="Buell C.R."/>
            <person name="Joardar V."/>
            <person name="Lindeberg M."/>
            <person name="Selengut J."/>
            <person name="Paulsen I.T."/>
            <person name="Gwinn M.L."/>
            <person name="Dodson R.J."/>
            <person name="DeBoy R.T."/>
            <person name="Durkin A.S."/>
            <person name="Kolonay J.F."/>
            <person name="Madupu R."/>
            <person name="Daugherty S.C."/>
            <person name="Brinkac L.M."/>
            <person name="Beanan M.J."/>
            <person name="Haft D.H."/>
            <person name="Nelson W.C."/>
            <person name="Davidsen T.M."/>
            <person name="Zafar N."/>
            <person name="Zhou L."/>
            <person name="Liu J."/>
            <person name="Yuan Q."/>
            <person name="Khouri H.M."/>
            <person name="Fedorova N.B."/>
            <person name="Tran B."/>
            <person name="Russell D."/>
            <person name="Berry K.J."/>
            <person name="Utterback T.R."/>
            <person name="Van Aken S.E."/>
            <person name="Feldblyum T.V."/>
            <person name="D'Ascenzo M."/>
            <person name="Deng W.-L."/>
            <person name="Ramos A.R."/>
            <person name="Alfano J.R."/>
            <person name="Cartinhour S."/>
            <person name="Chatterjee A.K."/>
            <person name="Delaney T.P."/>
            <person name="Lazarowitz S.G."/>
            <person name="Martin G.B."/>
            <person name="Schneider D.J."/>
            <person name="Tang X."/>
            <person name="Bender C.L."/>
            <person name="White O."/>
            <person name="Fraser C.M."/>
            <person name="Collmer A."/>
        </authorList>
    </citation>
    <scope>NUCLEOTIDE SEQUENCE [LARGE SCALE GENOMIC DNA]</scope>
    <source>
        <strain>ATCC BAA-871 / DC3000</strain>
    </source>
</reference>
<gene>
    <name evidence="1" type="primary">thrS</name>
    <name type="ordered locus">PSPTO_2378</name>
</gene>